<sequence>MLYPIFIFILAGLCEIGGGYLIWLWLREGQSSLVGLIGGAILMLYGVIATFQSFPSFGRVYAAYGGVFIIMSLIFAMVVDKQMPDKYDVIGAIICIVGVLVMLLPSRA</sequence>
<comment type="subcellular location">
    <subcellularLocation>
        <location evidence="1">Cell membrane</location>
        <topology evidence="1">Multi-pass membrane protein</topology>
    </subcellularLocation>
</comment>
<comment type="similarity">
    <text evidence="1">Belongs to the UPF0060 family.</text>
</comment>
<organism>
    <name type="scientific">Staphylococcus aureus (strain Mu3 / ATCC 700698)</name>
    <dbReference type="NCBI Taxonomy" id="418127"/>
    <lineage>
        <taxon>Bacteria</taxon>
        <taxon>Bacillati</taxon>
        <taxon>Bacillota</taxon>
        <taxon>Bacilli</taxon>
        <taxon>Bacillales</taxon>
        <taxon>Staphylococcaceae</taxon>
        <taxon>Staphylococcus</taxon>
    </lineage>
</organism>
<proteinExistence type="inferred from homology"/>
<evidence type="ECO:0000255" key="1">
    <source>
        <dbReference type="HAMAP-Rule" id="MF_00010"/>
    </source>
</evidence>
<dbReference type="EMBL" id="AP009324">
    <property type="protein sequence ID" value="BAF79206.1"/>
    <property type="molecule type" value="Genomic_DNA"/>
</dbReference>
<dbReference type="RefSeq" id="WP_000966695.1">
    <property type="nucleotide sequence ID" value="NZ_CTYB01000041.1"/>
</dbReference>
<dbReference type="SMR" id="A7X5U9"/>
<dbReference type="KEGG" id="saw:SAHV_2323"/>
<dbReference type="HOGENOM" id="CLU_117653_0_1_9"/>
<dbReference type="GO" id="GO:0005886">
    <property type="term" value="C:plasma membrane"/>
    <property type="evidence" value="ECO:0007669"/>
    <property type="project" value="UniProtKB-SubCell"/>
</dbReference>
<dbReference type="HAMAP" id="MF_00010">
    <property type="entry name" value="UPF0060"/>
    <property type="match status" value="1"/>
</dbReference>
<dbReference type="InterPro" id="IPR003844">
    <property type="entry name" value="UPF0060"/>
</dbReference>
<dbReference type="NCBIfam" id="NF002586">
    <property type="entry name" value="PRK02237.1"/>
    <property type="match status" value="1"/>
</dbReference>
<dbReference type="PANTHER" id="PTHR36116">
    <property type="entry name" value="UPF0060 MEMBRANE PROTEIN YNFA"/>
    <property type="match status" value="1"/>
</dbReference>
<dbReference type="PANTHER" id="PTHR36116:SF1">
    <property type="entry name" value="UPF0060 MEMBRANE PROTEIN YNFA"/>
    <property type="match status" value="1"/>
</dbReference>
<dbReference type="Pfam" id="PF02694">
    <property type="entry name" value="UPF0060"/>
    <property type="match status" value="1"/>
</dbReference>
<dbReference type="SUPFAM" id="SSF103481">
    <property type="entry name" value="Multidrug resistance efflux transporter EmrE"/>
    <property type="match status" value="1"/>
</dbReference>
<name>Y2323_STAA1</name>
<protein>
    <recommendedName>
        <fullName evidence="1">UPF0060 membrane protein SAHV_2323</fullName>
    </recommendedName>
</protein>
<reference key="1">
    <citation type="journal article" date="2008" name="Antimicrob. Agents Chemother.">
        <title>Mutated response regulator graR is responsible for phenotypic conversion of Staphylococcus aureus from heterogeneous vancomycin-intermediate resistance to vancomycin-intermediate resistance.</title>
        <authorList>
            <person name="Neoh H.-M."/>
            <person name="Cui L."/>
            <person name="Yuzawa H."/>
            <person name="Takeuchi F."/>
            <person name="Matsuo M."/>
            <person name="Hiramatsu K."/>
        </authorList>
    </citation>
    <scope>NUCLEOTIDE SEQUENCE [LARGE SCALE GENOMIC DNA]</scope>
    <source>
        <strain>Mu3 / ATCC 700698</strain>
    </source>
</reference>
<gene>
    <name type="ordered locus">SAHV_2323</name>
</gene>
<feature type="chain" id="PRO_1000000767" description="UPF0060 membrane protein SAHV_2323">
    <location>
        <begin position="1"/>
        <end position="108"/>
    </location>
</feature>
<feature type="transmembrane region" description="Helical" evidence="1">
    <location>
        <begin position="5"/>
        <end position="25"/>
    </location>
</feature>
<feature type="transmembrane region" description="Helical" evidence="1">
    <location>
        <begin position="31"/>
        <end position="51"/>
    </location>
</feature>
<feature type="transmembrane region" description="Helical" evidence="1">
    <location>
        <begin position="60"/>
        <end position="80"/>
    </location>
</feature>
<feature type="transmembrane region" description="Helical" evidence="1">
    <location>
        <begin position="86"/>
        <end position="106"/>
    </location>
</feature>
<accession>A7X5U9</accession>
<keyword id="KW-1003">Cell membrane</keyword>
<keyword id="KW-0472">Membrane</keyword>
<keyword id="KW-0812">Transmembrane</keyword>
<keyword id="KW-1133">Transmembrane helix</keyword>